<protein>
    <recommendedName>
        <fullName evidence="1">Histidine biosynthesis bifunctional protein HisIE</fullName>
    </recommendedName>
    <domain>
        <recommendedName>
            <fullName evidence="1">Phosphoribosyl-AMP cyclohydrolase</fullName>
            <shortName evidence="1">PRA-CH</shortName>
            <ecNumber evidence="1">3.5.4.19</ecNumber>
        </recommendedName>
    </domain>
    <domain>
        <recommendedName>
            <fullName evidence="1">Phosphoribosyl-ATP pyrophosphatase</fullName>
            <shortName evidence="1">PRA-PH</shortName>
            <ecNumber evidence="1">3.6.1.31</ecNumber>
        </recommendedName>
    </domain>
</protein>
<proteinExistence type="inferred from homology"/>
<feature type="chain" id="PRO_0000136416" description="Histidine biosynthesis bifunctional protein HisIE">
    <location>
        <begin position="1"/>
        <end position="231"/>
    </location>
</feature>
<feature type="region of interest" description="Phosphoribosyl-AMP cyclohydrolase">
    <location>
        <begin position="1"/>
        <end position="130"/>
    </location>
</feature>
<feature type="region of interest" description="Phosphoribosyl-ATP pyrophosphohydrolase">
    <location>
        <begin position="131"/>
        <end position="231"/>
    </location>
</feature>
<sequence>MQDVFRQIDWERYELIPTIVQEKQSQQILMLAYSSKQSLELSLQTHLAHYFSRSKQRIWQKGEQSGHIQHIKEVKLDCDNDSLIFIVEQVGVACHTGEKSCFFRIFSLDKNCQNPPVSMPQKYPIGVYHILDDLYHIIEQRRCENIEHSYTASLLAKGVNGIGKKIIEEAGELCFALKDKDEKAIIYECADLFYHILVGLALEHITPERVLQELRRRMGQSGIEEKASRKH</sequence>
<evidence type="ECO:0000255" key="1">
    <source>
        <dbReference type="HAMAP-Rule" id="MF_01019"/>
    </source>
</evidence>
<name>HIS2_HELHP</name>
<dbReference type="EC" id="3.5.4.19" evidence="1"/>
<dbReference type="EC" id="3.6.1.31" evidence="1"/>
<dbReference type="EMBL" id="AE017125">
    <property type="protein sequence ID" value="AAP77046.1"/>
    <property type="molecule type" value="Genomic_DNA"/>
</dbReference>
<dbReference type="RefSeq" id="WP_011115291.1">
    <property type="nucleotide sequence ID" value="NC_004917.1"/>
</dbReference>
<dbReference type="SMR" id="Q7VJ02"/>
<dbReference type="STRING" id="235279.HH_0449"/>
<dbReference type="KEGG" id="hhe:HH_0449"/>
<dbReference type="eggNOG" id="COG0139">
    <property type="taxonomic scope" value="Bacteria"/>
</dbReference>
<dbReference type="eggNOG" id="COG0140">
    <property type="taxonomic scope" value="Bacteria"/>
</dbReference>
<dbReference type="HOGENOM" id="CLU_048577_3_0_7"/>
<dbReference type="OrthoDB" id="9795769at2"/>
<dbReference type="UniPathway" id="UPA00031">
    <property type="reaction ID" value="UER00007"/>
</dbReference>
<dbReference type="UniPathway" id="UPA00031">
    <property type="reaction ID" value="UER00008"/>
</dbReference>
<dbReference type="Proteomes" id="UP000002495">
    <property type="component" value="Chromosome"/>
</dbReference>
<dbReference type="GO" id="GO:0005737">
    <property type="term" value="C:cytoplasm"/>
    <property type="evidence" value="ECO:0007669"/>
    <property type="project" value="UniProtKB-SubCell"/>
</dbReference>
<dbReference type="GO" id="GO:0005524">
    <property type="term" value="F:ATP binding"/>
    <property type="evidence" value="ECO:0007669"/>
    <property type="project" value="UniProtKB-KW"/>
</dbReference>
<dbReference type="GO" id="GO:0004635">
    <property type="term" value="F:phosphoribosyl-AMP cyclohydrolase activity"/>
    <property type="evidence" value="ECO:0007669"/>
    <property type="project" value="UniProtKB-UniRule"/>
</dbReference>
<dbReference type="GO" id="GO:0004636">
    <property type="term" value="F:phosphoribosyl-ATP diphosphatase activity"/>
    <property type="evidence" value="ECO:0007669"/>
    <property type="project" value="UniProtKB-UniRule"/>
</dbReference>
<dbReference type="GO" id="GO:0000105">
    <property type="term" value="P:L-histidine biosynthetic process"/>
    <property type="evidence" value="ECO:0007669"/>
    <property type="project" value="UniProtKB-UniRule"/>
</dbReference>
<dbReference type="CDD" id="cd11534">
    <property type="entry name" value="NTP-PPase_HisIE_like"/>
    <property type="match status" value="1"/>
</dbReference>
<dbReference type="FunFam" id="3.10.20.810:FF:000001">
    <property type="entry name" value="Histidine biosynthesis bifunctional protein HisIE"/>
    <property type="match status" value="1"/>
</dbReference>
<dbReference type="Gene3D" id="1.10.287.1080">
    <property type="entry name" value="MazG-like"/>
    <property type="match status" value="1"/>
</dbReference>
<dbReference type="Gene3D" id="3.10.20.810">
    <property type="entry name" value="Phosphoribosyl-AMP cyclohydrolase"/>
    <property type="match status" value="1"/>
</dbReference>
<dbReference type="HAMAP" id="MF_01020">
    <property type="entry name" value="HisE"/>
    <property type="match status" value="1"/>
</dbReference>
<dbReference type="HAMAP" id="MF_01019">
    <property type="entry name" value="HisIE"/>
    <property type="match status" value="1"/>
</dbReference>
<dbReference type="InterPro" id="IPR023019">
    <property type="entry name" value="His_synth_HisIE"/>
</dbReference>
<dbReference type="InterPro" id="IPR008179">
    <property type="entry name" value="HisE"/>
</dbReference>
<dbReference type="InterPro" id="IPR021130">
    <property type="entry name" value="PRib-ATP_PPHydrolase-like"/>
</dbReference>
<dbReference type="InterPro" id="IPR002496">
    <property type="entry name" value="PRib_AMP_CycHydrolase_dom"/>
</dbReference>
<dbReference type="InterPro" id="IPR038019">
    <property type="entry name" value="PRib_AMP_CycHydrolase_sf"/>
</dbReference>
<dbReference type="NCBIfam" id="TIGR03188">
    <property type="entry name" value="histidine_hisI"/>
    <property type="match status" value="1"/>
</dbReference>
<dbReference type="NCBIfam" id="NF000768">
    <property type="entry name" value="PRK00051.1"/>
    <property type="match status" value="1"/>
</dbReference>
<dbReference type="NCBIfam" id="NF001611">
    <property type="entry name" value="PRK00400.1-3"/>
    <property type="match status" value="1"/>
</dbReference>
<dbReference type="NCBIfam" id="NF002747">
    <property type="entry name" value="PRK02759.1"/>
    <property type="match status" value="1"/>
</dbReference>
<dbReference type="PANTHER" id="PTHR42945">
    <property type="entry name" value="HISTIDINE BIOSYNTHESIS BIFUNCTIONAL PROTEIN"/>
    <property type="match status" value="1"/>
</dbReference>
<dbReference type="PANTHER" id="PTHR42945:SF1">
    <property type="entry name" value="HISTIDINE BIOSYNTHESIS BIFUNCTIONAL PROTEIN HIS7"/>
    <property type="match status" value="1"/>
</dbReference>
<dbReference type="Pfam" id="PF01502">
    <property type="entry name" value="PRA-CH"/>
    <property type="match status" value="1"/>
</dbReference>
<dbReference type="Pfam" id="PF01503">
    <property type="entry name" value="PRA-PH"/>
    <property type="match status" value="1"/>
</dbReference>
<dbReference type="SUPFAM" id="SSF101386">
    <property type="entry name" value="all-alpha NTP pyrophosphatases"/>
    <property type="match status" value="1"/>
</dbReference>
<dbReference type="SUPFAM" id="SSF141734">
    <property type="entry name" value="HisI-like"/>
    <property type="match status" value="1"/>
</dbReference>
<gene>
    <name evidence="1" type="primary">hisI</name>
    <name evidence="1" type="synonym">hisIE</name>
    <name type="ordered locus">HH_0449</name>
</gene>
<reference key="1">
    <citation type="journal article" date="2003" name="Proc. Natl. Acad. Sci. U.S.A.">
        <title>The complete genome sequence of the carcinogenic bacterium Helicobacter hepaticus.</title>
        <authorList>
            <person name="Suerbaum S."/>
            <person name="Josenhans C."/>
            <person name="Sterzenbach T."/>
            <person name="Drescher B."/>
            <person name="Brandt P."/>
            <person name="Bell M."/>
            <person name="Droege M."/>
            <person name="Fartmann B."/>
            <person name="Fischer H.-P."/>
            <person name="Ge Z."/>
            <person name="Hoerster A."/>
            <person name="Holland R."/>
            <person name="Klein K."/>
            <person name="Koenig J."/>
            <person name="Macko L."/>
            <person name="Mendz G.L."/>
            <person name="Nyakatura G."/>
            <person name="Schauer D.B."/>
            <person name="Shen Z."/>
            <person name="Weber J."/>
            <person name="Frosch M."/>
            <person name="Fox J.G."/>
        </authorList>
    </citation>
    <scope>NUCLEOTIDE SEQUENCE [LARGE SCALE GENOMIC DNA]</scope>
    <source>
        <strain>ATCC 51449 / 3B1</strain>
    </source>
</reference>
<comment type="catalytic activity">
    <reaction evidence="1">
        <text>1-(5-phospho-beta-D-ribosyl)-ATP + H2O = 1-(5-phospho-beta-D-ribosyl)-5'-AMP + diphosphate + H(+)</text>
        <dbReference type="Rhea" id="RHEA:22828"/>
        <dbReference type="ChEBI" id="CHEBI:15377"/>
        <dbReference type="ChEBI" id="CHEBI:15378"/>
        <dbReference type="ChEBI" id="CHEBI:33019"/>
        <dbReference type="ChEBI" id="CHEBI:59457"/>
        <dbReference type="ChEBI" id="CHEBI:73183"/>
        <dbReference type="EC" id="3.6.1.31"/>
    </reaction>
</comment>
<comment type="catalytic activity">
    <reaction evidence="1">
        <text>1-(5-phospho-beta-D-ribosyl)-5'-AMP + H2O = 1-(5-phospho-beta-D-ribosyl)-5-[(5-phospho-beta-D-ribosylamino)methylideneamino]imidazole-4-carboxamide</text>
        <dbReference type="Rhea" id="RHEA:20049"/>
        <dbReference type="ChEBI" id="CHEBI:15377"/>
        <dbReference type="ChEBI" id="CHEBI:58435"/>
        <dbReference type="ChEBI" id="CHEBI:59457"/>
        <dbReference type="EC" id="3.5.4.19"/>
    </reaction>
</comment>
<comment type="pathway">
    <text evidence="1">Amino-acid biosynthesis; L-histidine biosynthesis; L-histidine from 5-phospho-alpha-D-ribose 1-diphosphate: step 2/9.</text>
</comment>
<comment type="pathway">
    <text evidence="1">Amino-acid biosynthesis; L-histidine biosynthesis; L-histidine from 5-phospho-alpha-D-ribose 1-diphosphate: step 3/9.</text>
</comment>
<comment type="subcellular location">
    <subcellularLocation>
        <location evidence="1">Cytoplasm</location>
    </subcellularLocation>
</comment>
<comment type="similarity">
    <text evidence="1">In the N-terminal section; belongs to the PRA-CH family.</text>
</comment>
<comment type="similarity">
    <text evidence="1">In the C-terminal section; belongs to the PRA-PH family.</text>
</comment>
<organism>
    <name type="scientific">Helicobacter hepaticus (strain ATCC 51449 / 3B1)</name>
    <dbReference type="NCBI Taxonomy" id="235279"/>
    <lineage>
        <taxon>Bacteria</taxon>
        <taxon>Pseudomonadati</taxon>
        <taxon>Campylobacterota</taxon>
        <taxon>Epsilonproteobacteria</taxon>
        <taxon>Campylobacterales</taxon>
        <taxon>Helicobacteraceae</taxon>
        <taxon>Helicobacter</taxon>
    </lineage>
</organism>
<keyword id="KW-0028">Amino-acid biosynthesis</keyword>
<keyword id="KW-0067">ATP-binding</keyword>
<keyword id="KW-0963">Cytoplasm</keyword>
<keyword id="KW-0368">Histidine biosynthesis</keyword>
<keyword id="KW-0378">Hydrolase</keyword>
<keyword id="KW-0511">Multifunctional enzyme</keyword>
<keyword id="KW-0547">Nucleotide-binding</keyword>
<keyword id="KW-1185">Reference proteome</keyword>
<accession>Q7VJ02</accession>